<dbReference type="EMBL" id="CU329671">
    <property type="protein sequence ID" value="CAA21161.1"/>
    <property type="molecule type" value="Genomic_DNA"/>
</dbReference>
<dbReference type="PIR" id="T40106">
    <property type="entry name" value="T40106"/>
</dbReference>
<dbReference type="RefSeq" id="NP_001018829.2">
    <property type="nucleotide sequence ID" value="NM_001022142.3"/>
</dbReference>
<dbReference type="SMR" id="O74797"/>
<dbReference type="BioGRID" id="280392">
    <property type="interactions" value="9"/>
</dbReference>
<dbReference type="FunCoup" id="O74797">
    <property type="interactions" value="309"/>
</dbReference>
<dbReference type="STRING" id="284812.O74797"/>
<dbReference type="iPTMnet" id="O74797"/>
<dbReference type="PaxDb" id="4896-SPBC2D10.03c.1"/>
<dbReference type="EnsemblFungi" id="SPBC2D10.03c.1">
    <property type="protein sequence ID" value="SPBC2D10.03c.1:pep"/>
    <property type="gene ID" value="SPBC2D10.03c"/>
</dbReference>
<dbReference type="GeneID" id="3361316"/>
<dbReference type="KEGG" id="spo:3361316"/>
<dbReference type="PomBase" id="SPBC2D10.03c"/>
<dbReference type="VEuPathDB" id="FungiDB:SPBC2D10.03c"/>
<dbReference type="eggNOG" id="KOG1296">
    <property type="taxonomic scope" value="Eukaryota"/>
</dbReference>
<dbReference type="HOGENOM" id="CLU_114688_0_0_1"/>
<dbReference type="InParanoid" id="O74797"/>
<dbReference type="OMA" id="TAHFVWR"/>
<dbReference type="PhylomeDB" id="O74797"/>
<dbReference type="PRO" id="PR:O74797"/>
<dbReference type="Proteomes" id="UP000002485">
    <property type="component" value="Chromosome II"/>
</dbReference>
<dbReference type="GO" id="GO:0005829">
    <property type="term" value="C:cytosol"/>
    <property type="evidence" value="ECO:0007005"/>
    <property type="project" value="PomBase"/>
</dbReference>
<dbReference type="GO" id="GO:0005634">
    <property type="term" value="C:nucleus"/>
    <property type="evidence" value="ECO:0007005"/>
    <property type="project" value="PomBase"/>
</dbReference>
<dbReference type="GO" id="GO:0008270">
    <property type="term" value="F:zinc ion binding"/>
    <property type="evidence" value="ECO:0000318"/>
    <property type="project" value="GO_Central"/>
</dbReference>
<dbReference type="InterPro" id="IPR008584">
    <property type="entry name" value="CXXC_Zn-binding_euk"/>
</dbReference>
<dbReference type="PANTHER" id="PTHR12857">
    <property type="entry name" value="CXXC MOTIF CONTAINING ZINC BINDING PROTEIN"/>
    <property type="match status" value="1"/>
</dbReference>
<dbReference type="PANTHER" id="PTHR12857:SF0">
    <property type="entry name" value="CXXC MOTIF CONTAINING ZINC BINDING PROTEIN"/>
    <property type="match status" value="1"/>
</dbReference>
<dbReference type="Pfam" id="PF05907">
    <property type="entry name" value="CXXC_Zn-b_euk"/>
    <property type="match status" value="1"/>
</dbReference>
<dbReference type="SUPFAM" id="SSF141678">
    <property type="entry name" value="MAL13P1.257-like"/>
    <property type="match status" value="1"/>
</dbReference>
<accession>O74797</accession>
<name>YGN3_SCHPO</name>
<reference key="1">
    <citation type="journal article" date="2002" name="Nature">
        <title>The genome sequence of Schizosaccharomyces pombe.</title>
        <authorList>
            <person name="Wood V."/>
            <person name="Gwilliam R."/>
            <person name="Rajandream M.A."/>
            <person name="Lyne M.H."/>
            <person name="Lyne R."/>
            <person name="Stewart A."/>
            <person name="Sgouros J.G."/>
            <person name="Peat N."/>
            <person name="Hayles J."/>
            <person name="Baker S.G."/>
            <person name="Basham D."/>
            <person name="Bowman S."/>
            <person name="Brooks K."/>
            <person name="Brown D."/>
            <person name="Brown S."/>
            <person name="Chillingworth T."/>
            <person name="Churcher C.M."/>
            <person name="Collins M."/>
            <person name="Connor R."/>
            <person name="Cronin A."/>
            <person name="Davis P."/>
            <person name="Feltwell T."/>
            <person name="Fraser A."/>
            <person name="Gentles S."/>
            <person name="Goble A."/>
            <person name="Hamlin N."/>
            <person name="Harris D.E."/>
            <person name="Hidalgo J."/>
            <person name="Hodgson G."/>
            <person name="Holroyd S."/>
            <person name="Hornsby T."/>
            <person name="Howarth S."/>
            <person name="Huckle E.J."/>
            <person name="Hunt S."/>
            <person name="Jagels K."/>
            <person name="James K.D."/>
            <person name="Jones L."/>
            <person name="Jones M."/>
            <person name="Leather S."/>
            <person name="McDonald S."/>
            <person name="McLean J."/>
            <person name="Mooney P."/>
            <person name="Moule S."/>
            <person name="Mungall K.L."/>
            <person name="Murphy L.D."/>
            <person name="Niblett D."/>
            <person name="Odell C."/>
            <person name="Oliver K."/>
            <person name="O'Neil S."/>
            <person name="Pearson D."/>
            <person name="Quail M.A."/>
            <person name="Rabbinowitsch E."/>
            <person name="Rutherford K.M."/>
            <person name="Rutter S."/>
            <person name="Saunders D."/>
            <person name="Seeger K."/>
            <person name="Sharp S."/>
            <person name="Skelton J."/>
            <person name="Simmonds M.N."/>
            <person name="Squares R."/>
            <person name="Squares S."/>
            <person name="Stevens K."/>
            <person name="Taylor K."/>
            <person name="Taylor R.G."/>
            <person name="Tivey A."/>
            <person name="Walsh S.V."/>
            <person name="Warren T."/>
            <person name="Whitehead S."/>
            <person name="Woodward J.R."/>
            <person name="Volckaert G."/>
            <person name="Aert R."/>
            <person name="Robben J."/>
            <person name="Grymonprez B."/>
            <person name="Weltjens I."/>
            <person name="Vanstreels E."/>
            <person name="Rieger M."/>
            <person name="Schaefer M."/>
            <person name="Mueller-Auer S."/>
            <person name="Gabel C."/>
            <person name="Fuchs M."/>
            <person name="Duesterhoeft A."/>
            <person name="Fritzc C."/>
            <person name="Holzer E."/>
            <person name="Moestl D."/>
            <person name="Hilbert H."/>
            <person name="Borzym K."/>
            <person name="Langer I."/>
            <person name="Beck A."/>
            <person name="Lehrach H."/>
            <person name="Reinhardt R."/>
            <person name="Pohl T.M."/>
            <person name="Eger P."/>
            <person name="Zimmermann W."/>
            <person name="Wedler H."/>
            <person name="Wambutt R."/>
            <person name="Purnelle B."/>
            <person name="Goffeau A."/>
            <person name="Cadieu E."/>
            <person name="Dreano S."/>
            <person name="Gloux S."/>
            <person name="Lelaure V."/>
            <person name="Mottier S."/>
            <person name="Galibert F."/>
            <person name="Aves S.J."/>
            <person name="Xiang Z."/>
            <person name="Hunt C."/>
            <person name="Moore K."/>
            <person name="Hurst S.M."/>
            <person name="Lucas M."/>
            <person name="Rochet M."/>
            <person name="Gaillardin C."/>
            <person name="Tallada V.A."/>
            <person name="Garzon A."/>
            <person name="Thode G."/>
            <person name="Daga R.R."/>
            <person name="Cruzado L."/>
            <person name="Jimenez J."/>
            <person name="Sanchez M."/>
            <person name="del Rey F."/>
            <person name="Benito J."/>
            <person name="Dominguez A."/>
            <person name="Revuelta J.L."/>
            <person name="Moreno S."/>
            <person name="Armstrong J."/>
            <person name="Forsburg S.L."/>
            <person name="Cerutti L."/>
            <person name="Lowe T."/>
            <person name="McCombie W.R."/>
            <person name="Paulsen I."/>
            <person name="Potashkin J."/>
            <person name="Shpakovski G.V."/>
            <person name="Ussery D."/>
            <person name="Barrell B.G."/>
            <person name="Nurse P."/>
        </authorList>
    </citation>
    <scope>NUCLEOTIDE SEQUENCE [LARGE SCALE GENOMIC DNA]</scope>
    <source>
        <strain>972 / ATCC 24843</strain>
    </source>
</reference>
<reference key="2">
    <citation type="journal article" date="2018" name="PeerJ">
        <title>Crystal structure and functional analysis of human C1ORF123.</title>
        <authorList>
            <person name="Rahaman S.N."/>
            <person name="Mat Yusop J."/>
            <person name="Mohamed-Hussein Z.A."/>
            <person name="Aizat W.M."/>
            <person name="Ho K.L."/>
            <person name="Teh A.H."/>
            <person name="Waterman J."/>
            <person name="Tan B.K."/>
            <person name="Tan H.L."/>
            <person name="Li A.Y."/>
            <person name="Chen E.S."/>
            <person name="Ng C.L."/>
        </authorList>
    </citation>
    <scope>DISRUPTION PHENOTYPE</scope>
</reference>
<evidence type="ECO:0000250" key="1">
    <source>
        <dbReference type="UniProtKB" id="Q9NWV4"/>
    </source>
</evidence>
<evidence type="ECO:0000269" key="2">
    <source>
    </source>
</evidence>
<evidence type="ECO:0000303" key="3">
    <source>
    </source>
</evidence>
<evidence type="ECO:0000305" key="4"/>
<feature type="chain" id="PRO_0000338391" description="UPF0587 protein C2D10.03c">
    <location>
        <begin position="1"/>
        <end position="157"/>
    </location>
</feature>
<feature type="binding site" evidence="1">
    <location>
        <position position="34"/>
    </location>
    <ligand>
        <name>Zn(2+)</name>
        <dbReference type="ChEBI" id="CHEBI:29105"/>
    </ligand>
</feature>
<feature type="binding site" evidence="1">
    <location>
        <position position="37"/>
    </location>
    <ligand>
        <name>Zn(2+)</name>
        <dbReference type="ChEBI" id="CHEBI:29105"/>
    </ligand>
</feature>
<feature type="binding site" evidence="1">
    <location>
        <position position="68"/>
    </location>
    <ligand>
        <name>Zn(2+)</name>
        <dbReference type="ChEBI" id="CHEBI:29105"/>
    </ligand>
</feature>
<feature type="binding site" evidence="1">
    <location>
        <position position="71"/>
    </location>
    <ligand>
        <name>Zn(2+)</name>
        <dbReference type="ChEBI" id="CHEBI:29105"/>
    </ligand>
</feature>
<keyword id="KW-0479">Metal-binding</keyword>
<keyword id="KW-1185">Reference proteome</keyword>
<keyword id="KW-0862">Zinc</keyword>
<organism>
    <name type="scientific">Schizosaccharomyces pombe (strain 972 / ATCC 24843)</name>
    <name type="common">Fission yeast</name>
    <dbReference type="NCBI Taxonomy" id="284812"/>
    <lineage>
        <taxon>Eukaryota</taxon>
        <taxon>Fungi</taxon>
        <taxon>Dikarya</taxon>
        <taxon>Ascomycota</taxon>
        <taxon>Taphrinomycotina</taxon>
        <taxon>Schizosaccharomycetes</taxon>
        <taxon>Schizosaccharomycetales</taxon>
        <taxon>Schizosaccharomycetaceae</taxon>
        <taxon>Schizosaccharomyces</taxon>
    </lineage>
</organism>
<comment type="domain">
    <text evidence="1">Requires a bound zinc ion for normal folding and solubility.</text>
</comment>
<comment type="disruption phenotype">
    <text evidence="2">No obvious growth defects. No increased sensitivity to oxidative stress caused by exposure to hydrogen peroxide (in vitro).</text>
</comment>
<comment type="similarity">
    <text evidence="4">Belongs to the UPF0587 family.</text>
</comment>
<gene>
    <name evidence="3" type="primary">Ess1</name>
    <name type="ORF">SPBC2D10.03c</name>
</gene>
<proteinExistence type="inferred from homology"/>
<protein>
    <recommendedName>
        <fullName>UPF0587 protein C2D10.03c</fullName>
    </recommendedName>
</protein>
<sequence>MGKFALNLNAELTGVKNLAPKDEESFYYAFKVQCSGCREIHDNAIEISRSETHSIPGSKGEANLIWTCKNCRKTCSFVIEGPFSPYNDSQETKKVLVLECRGCELVEFIPQGEWIANGAESNTLFDEIVLEDDWYDYDENASSEVSITNLEWSISKA</sequence>